<keyword id="KW-0963">Cytoplasm</keyword>
<keyword id="KW-0251">Elongation factor</keyword>
<keyword id="KW-0342">GTP-binding</keyword>
<keyword id="KW-0547">Nucleotide-binding</keyword>
<keyword id="KW-0648">Protein biosynthesis</keyword>
<keyword id="KW-1185">Reference proteome</keyword>
<comment type="function">
    <text evidence="1">Catalyzes the GTP-dependent ribosomal translocation step during translation elongation. During this step, the ribosome changes from the pre-translocational (PRE) to the post-translocational (POST) state as the newly formed A-site-bound peptidyl-tRNA and P-site-bound deacylated tRNA move to the P and E sites, respectively. Catalyzes the coordinated movement of the two tRNA molecules, the mRNA and conformational changes in the ribosome.</text>
</comment>
<comment type="subcellular location">
    <subcellularLocation>
        <location evidence="1">Cytoplasm</location>
    </subcellularLocation>
</comment>
<comment type="similarity">
    <text evidence="1">Belongs to the TRAFAC class translation factor GTPase superfamily. Classic translation factor GTPase family. EF-G/EF-2 subfamily.</text>
</comment>
<protein>
    <recommendedName>
        <fullName evidence="1">Elongation factor G</fullName>
        <shortName evidence="1">EF-G</shortName>
    </recommendedName>
</protein>
<sequence>MPRKFPLEKTRNIGIMAHIDAGKTTTTERILFHTGKIHKIGETHDGDSQMDWMKQEQERGITITSAATTAFWKEHRINIIDTPGHVDFTVEVSRSLRVLDGAVAVIDAKAGVEPQTETVWRQATEYKVPRIIFVNKMDKIGASFDYAVKTLYQRLGINASPIQLPIGSENEFKGIVDLLEMTGVEFLGTSDEKFKTIEIPEYMKELAQNKRIELIEKMANYDEELMMDYLNGKEITVEKLKNVIRQATLKADFFPVLCGSAFKNKGVKKILDAIIDYLPSPMDVSSIVGCNFENKEIIRKTSDNEPFTALAFKVMTDPYVGKLTFFRVYAGTIKTGSYVTNATKQVKERLGRLLQMHANSREEIKEVYAGDIVAAVGLKNTTTGDTLTSINDDIILESMNFPEPVIEIAIEPKTKADQDKIGIALSKLSEEDPTFKIYTNRETGQTIIAGMGELHLEIILDRLKTEFKVEANVNQPQVAYRETLTKISTTEGKFIRQSGGRGQYGHVIIRFEPNSDKGNEFINKIVGGVIPKEYIPAVKKGLEESLSNGILAGFPLIDVKATLIDGSYHDVDSSEIAFKIAASMALKQTKNEGNLVILEPIMEVEIITPNDYIGNVIGDLTSRRGKLENQDSRENTVIIKALVPLSEMFGYATILRSNTQGRASFIMQFLKYERAPKNIAEEIIKKRN</sequence>
<evidence type="ECO:0000255" key="1">
    <source>
        <dbReference type="HAMAP-Rule" id="MF_00054"/>
    </source>
</evidence>
<feature type="chain" id="PRO_1000201481" description="Elongation factor G">
    <location>
        <begin position="1"/>
        <end position="688"/>
    </location>
</feature>
<feature type="domain" description="tr-type G">
    <location>
        <begin position="8"/>
        <end position="282"/>
    </location>
</feature>
<feature type="binding site" evidence="1">
    <location>
        <begin position="17"/>
        <end position="24"/>
    </location>
    <ligand>
        <name>GTP</name>
        <dbReference type="ChEBI" id="CHEBI:37565"/>
    </ligand>
</feature>
<feature type="binding site" evidence="1">
    <location>
        <begin position="81"/>
        <end position="85"/>
    </location>
    <ligand>
        <name>GTP</name>
        <dbReference type="ChEBI" id="CHEBI:37565"/>
    </ligand>
</feature>
<feature type="binding site" evidence="1">
    <location>
        <begin position="135"/>
        <end position="138"/>
    </location>
    <ligand>
        <name>GTP</name>
        <dbReference type="ChEBI" id="CHEBI:37565"/>
    </ligand>
</feature>
<organism>
    <name type="scientific">Phytoplasma mali (strain AT)</name>
    <dbReference type="NCBI Taxonomy" id="482235"/>
    <lineage>
        <taxon>Bacteria</taxon>
        <taxon>Bacillati</taxon>
        <taxon>Mycoplasmatota</taxon>
        <taxon>Mollicutes</taxon>
        <taxon>Acholeplasmatales</taxon>
        <taxon>Acholeplasmataceae</taxon>
        <taxon>Candidatus Phytoplasma</taxon>
        <taxon>16SrX (Apple proliferation group)</taxon>
    </lineage>
</organism>
<name>EFG_PHYMT</name>
<accession>B3QZH4</accession>
<dbReference type="EMBL" id="CU469464">
    <property type="protein sequence ID" value="CAP18581.1"/>
    <property type="molecule type" value="Genomic_DNA"/>
</dbReference>
<dbReference type="SMR" id="B3QZH4"/>
<dbReference type="STRING" id="37692.ATP_00394"/>
<dbReference type="KEGG" id="pml:ATP_00394"/>
<dbReference type="eggNOG" id="COG0480">
    <property type="taxonomic scope" value="Bacteria"/>
</dbReference>
<dbReference type="HOGENOM" id="CLU_002794_4_1_14"/>
<dbReference type="Proteomes" id="UP000002020">
    <property type="component" value="Chromosome"/>
</dbReference>
<dbReference type="GO" id="GO:0005737">
    <property type="term" value="C:cytoplasm"/>
    <property type="evidence" value="ECO:0007669"/>
    <property type="project" value="UniProtKB-SubCell"/>
</dbReference>
<dbReference type="GO" id="GO:0005525">
    <property type="term" value="F:GTP binding"/>
    <property type="evidence" value="ECO:0007669"/>
    <property type="project" value="UniProtKB-UniRule"/>
</dbReference>
<dbReference type="GO" id="GO:0003924">
    <property type="term" value="F:GTPase activity"/>
    <property type="evidence" value="ECO:0007669"/>
    <property type="project" value="InterPro"/>
</dbReference>
<dbReference type="GO" id="GO:0003746">
    <property type="term" value="F:translation elongation factor activity"/>
    <property type="evidence" value="ECO:0007669"/>
    <property type="project" value="UniProtKB-UniRule"/>
</dbReference>
<dbReference type="GO" id="GO:0032790">
    <property type="term" value="P:ribosome disassembly"/>
    <property type="evidence" value="ECO:0007669"/>
    <property type="project" value="TreeGrafter"/>
</dbReference>
<dbReference type="CDD" id="cd01886">
    <property type="entry name" value="EF-G"/>
    <property type="match status" value="1"/>
</dbReference>
<dbReference type="CDD" id="cd16262">
    <property type="entry name" value="EFG_III"/>
    <property type="match status" value="1"/>
</dbReference>
<dbReference type="CDD" id="cd01434">
    <property type="entry name" value="EFG_mtEFG1_IV"/>
    <property type="match status" value="1"/>
</dbReference>
<dbReference type="CDD" id="cd03713">
    <property type="entry name" value="EFG_mtEFG_C"/>
    <property type="match status" value="1"/>
</dbReference>
<dbReference type="CDD" id="cd04088">
    <property type="entry name" value="EFG_mtEFG_II"/>
    <property type="match status" value="1"/>
</dbReference>
<dbReference type="FunFam" id="2.40.30.10:FF:000006">
    <property type="entry name" value="Elongation factor G"/>
    <property type="match status" value="1"/>
</dbReference>
<dbReference type="FunFam" id="3.30.230.10:FF:000003">
    <property type="entry name" value="Elongation factor G"/>
    <property type="match status" value="1"/>
</dbReference>
<dbReference type="FunFam" id="3.30.70.240:FF:000001">
    <property type="entry name" value="Elongation factor G"/>
    <property type="match status" value="1"/>
</dbReference>
<dbReference type="FunFam" id="3.30.70.870:FF:000001">
    <property type="entry name" value="Elongation factor G"/>
    <property type="match status" value="1"/>
</dbReference>
<dbReference type="FunFam" id="3.40.50.300:FF:000029">
    <property type="entry name" value="Elongation factor G"/>
    <property type="match status" value="1"/>
</dbReference>
<dbReference type="Gene3D" id="3.30.230.10">
    <property type="match status" value="1"/>
</dbReference>
<dbReference type="Gene3D" id="3.30.70.240">
    <property type="match status" value="1"/>
</dbReference>
<dbReference type="Gene3D" id="3.30.70.870">
    <property type="entry name" value="Elongation Factor G (Translational Gtpase), domain 3"/>
    <property type="match status" value="1"/>
</dbReference>
<dbReference type="Gene3D" id="3.40.50.300">
    <property type="entry name" value="P-loop containing nucleotide triphosphate hydrolases"/>
    <property type="match status" value="1"/>
</dbReference>
<dbReference type="Gene3D" id="2.40.30.10">
    <property type="entry name" value="Translation factors"/>
    <property type="match status" value="1"/>
</dbReference>
<dbReference type="HAMAP" id="MF_00054_B">
    <property type="entry name" value="EF_G_EF_2_B"/>
    <property type="match status" value="1"/>
</dbReference>
<dbReference type="InterPro" id="IPR053905">
    <property type="entry name" value="EF-G-like_DII"/>
</dbReference>
<dbReference type="InterPro" id="IPR041095">
    <property type="entry name" value="EFG_II"/>
</dbReference>
<dbReference type="InterPro" id="IPR009022">
    <property type="entry name" value="EFG_III"/>
</dbReference>
<dbReference type="InterPro" id="IPR035647">
    <property type="entry name" value="EFG_III/V"/>
</dbReference>
<dbReference type="InterPro" id="IPR047872">
    <property type="entry name" value="EFG_IV"/>
</dbReference>
<dbReference type="InterPro" id="IPR035649">
    <property type="entry name" value="EFG_V"/>
</dbReference>
<dbReference type="InterPro" id="IPR000640">
    <property type="entry name" value="EFG_V-like"/>
</dbReference>
<dbReference type="InterPro" id="IPR031157">
    <property type="entry name" value="G_TR_CS"/>
</dbReference>
<dbReference type="InterPro" id="IPR027417">
    <property type="entry name" value="P-loop_NTPase"/>
</dbReference>
<dbReference type="InterPro" id="IPR020568">
    <property type="entry name" value="Ribosomal_Su5_D2-typ_SF"/>
</dbReference>
<dbReference type="InterPro" id="IPR014721">
    <property type="entry name" value="Ribsml_uS5_D2-typ_fold_subgr"/>
</dbReference>
<dbReference type="InterPro" id="IPR005225">
    <property type="entry name" value="Small_GTP-bd"/>
</dbReference>
<dbReference type="InterPro" id="IPR000795">
    <property type="entry name" value="T_Tr_GTP-bd_dom"/>
</dbReference>
<dbReference type="InterPro" id="IPR009000">
    <property type="entry name" value="Transl_B-barrel_sf"/>
</dbReference>
<dbReference type="InterPro" id="IPR004540">
    <property type="entry name" value="Transl_elong_EFG/EF2"/>
</dbReference>
<dbReference type="InterPro" id="IPR005517">
    <property type="entry name" value="Transl_elong_EFG/EF2_IV"/>
</dbReference>
<dbReference type="NCBIfam" id="TIGR00484">
    <property type="entry name" value="EF-G"/>
    <property type="match status" value="1"/>
</dbReference>
<dbReference type="NCBIfam" id="NF009381">
    <property type="entry name" value="PRK12740.1-5"/>
    <property type="match status" value="1"/>
</dbReference>
<dbReference type="NCBIfam" id="TIGR00231">
    <property type="entry name" value="small_GTP"/>
    <property type="match status" value="1"/>
</dbReference>
<dbReference type="PANTHER" id="PTHR43261:SF1">
    <property type="entry name" value="RIBOSOME-RELEASING FACTOR 2, MITOCHONDRIAL"/>
    <property type="match status" value="1"/>
</dbReference>
<dbReference type="PANTHER" id="PTHR43261">
    <property type="entry name" value="TRANSLATION ELONGATION FACTOR G-RELATED"/>
    <property type="match status" value="1"/>
</dbReference>
<dbReference type="Pfam" id="PF22042">
    <property type="entry name" value="EF-G_D2"/>
    <property type="match status" value="1"/>
</dbReference>
<dbReference type="Pfam" id="PF00679">
    <property type="entry name" value="EFG_C"/>
    <property type="match status" value="1"/>
</dbReference>
<dbReference type="Pfam" id="PF14492">
    <property type="entry name" value="EFG_III"/>
    <property type="match status" value="1"/>
</dbReference>
<dbReference type="Pfam" id="PF03764">
    <property type="entry name" value="EFG_IV"/>
    <property type="match status" value="1"/>
</dbReference>
<dbReference type="Pfam" id="PF00009">
    <property type="entry name" value="GTP_EFTU"/>
    <property type="match status" value="1"/>
</dbReference>
<dbReference type="PRINTS" id="PR00315">
    <property type="entry name" value="ELONGATNFCT"/>
</dbReference>
<dbReference type="SMART" id="SM00838">
    <property type="entry name" value="EFG_C"/>
    <property type="match status" value="1"/>
</dbReference>
<dbReference type="SMART" id="SM00889">
    <property type="entry name" value="EFG_IV"/>
    <property type="match status" value="1"/>
</dbReference>
<dbReference type="SUPFAM" id="SSF54980">
    <property type="entry name" value="EF-G C-terminal domain-like"/>
    <property type="match status" value="2"/>
</dbReference>
<dbReference type="SUPFAM" id="SSF52540">
    <property type="entry name" value="P-loop containing nucleoside triphosphate hydrolases"/>
    <property type="match status" value="1"/>
</dbReference>
<dbReference type="SUPFAM" id="SSF54211">
    <property type="entry name" value="Ribosomal protein S5 domain 2-like"/>
    <property type="match status" value="1"/>
</dbReference>
<dbReference type="SUPFAM" id="SSF50447">
    <property type="entry name" value="Translation proteins"/>
    <property type="match status" value="1"/>
</dbReference>
<dbReference type="PROSITE" id="PS00301">
    <property type="entry name" value="G_TR_1"/>
    <property type="match status" value="1"/>
</dbReference>
<dbReference type="PROSITE" id="PS51722">
    <property type="entry name" value="G_TR_2"/>
    <property type="match status" value="1"/>
</dbReference>
<proteinExistence type="inferred from homology"/>
<reference key="1">
    <citation type="journal article" date="2008" name="BMC Genomics">
        <title>The linear chromosome of the plant-pathogenic mycoplasma 'Candidatus Phytoplasma mali'.</title>
        <authorList>
            <person name="Kube M."/>
            <person name="Schneider B."/>
            <person name="Kuhl H."/>
            <person name="Dandekar T."/>
            <person name="Heitmann K."/>
            <person name="Migdoll A.M."/>
            <person name="Reinhardt R."/>
            <person name="Seemueller E."/>
        </authorList>
    </citation>
    <scope>NUCLEOTIDE SEQUENCE [LARGE SCALE GENOMIC DNA]</scope>
    <source>
        <strain>AT</strain>
    </source>
</reference>
<gene>
    <name evidence="1" type="primary">fusA</name>
    <name type="ordered locus">ATP_00394</name>
</gene>